<dbReference type="EC" id="6.1.1.1" evidence="2"/>
<dbReference type="EMBL" id="AE013599">
    <property type="protein sequence ID" value="AAF47271.1"/>
    <property type="molecule type" value="Genomic_DNA"/>
</dbReference>
<dbReference type="EMBL" id="AY060975">
    <property type="protein sequence ID" value="AAL28523.1"/>
    <property type="status" value="ALT_INIT"/>
    <property type="molecule type" value="mRNA"/>
</dbReference>
<dbReference type="EMBL" id="AY113395">
    <property type="protein sequence ID" value="AAM29400.1"/>
    <property type="status" value="ALT_FRAME"/>
    <property type="molecule type" value="mRNA"/>
</dbReference>
<dbReference type="EMBL" id="BT030810">
    <property type="protein sequence ID" value="ABV82192.1"/>
    <property type="molecule type" value="mRNA"/>
</dbReference>
<dbReference type="RefSeq" id="NP_611967.1">
    <property type="nucleotide sequence ID" value="NM_138123.3"/>
</dbReference>
<dbReference type="SMR" id="Q9W107"/>
<dbReference type="BioGRID" id="63535">
    <property type="interactions" value="1"/>
</dbReference>
<dbReference type="FunCoup" id="Q9W107">
    <property type="interactions" value="1877"/>
</dbReference>
<dbReference type="STRING" id="7227.FBpp0072334"/>
<dbReference type="PaxDb" id="7227-FBpp0072334"/>
<dbReference type="DNASU" id="37965"/>
<dbReference type="EnsemblMetazoa" id="FBtr0072429">
    <property type="protein sequence ID" value="FBpp0072334"/>
    <property type="gene ID" value="FBgn0035064"/>
</dbReference>
<dbReference type="GeneID" id="37965"/>
<dbReference type="KEGG" id="dme:Dmel_CG16912"/>
<dbReference type="UCSC" id="CG16912-RA">
    <property type="organism name" value="d. melanogaster"/>
</dbReference>
<dbReference type="AGR" id="FB:FBgn0035064"/>
<dbReference type="CTD" id="37965"/>
<dbReference type="FlyBase" id="FBgn0035064">
    <property type="gene designation" value="TyrRS-m"/>
</dbReference>
<dbReference type="VEuPathDB" id="VectorBase:FBgn0035064"/>
<dbReference type="eggNOG" id="KOG2623">
    <property type="taxonomic scope" value="Eukaryota"/>
</dbReference>
<dbReference type="GeneTree" id="ENSGT00390000013709"/>
<dbReference type="HOGENOM" id="CLU_024003_0_3_1"/>
<dbReference type="InParanoid" id="Q9W107"/>
<dbReference type="OMA" id="YMMAKDS"/>
<dbReference type="OrthoDB" id="337870at2759"/>
<dbReference type="PhylomeDB" id="Q9W107"/>
<dbReference type="BioGRID-ORCS" id="37965">
    <property type="hits" value="1 hit in 3 CRISPR screens"/>
</dbReference>
<dbReference type="GenomeRNAi" id="37965"/>
<dbReference type="PRO" id="PR:Q9W107"/>
<dbReference type="Proteomes" id="UP000000803">
    <property type="component" value="Chromosome 2R"/>
</dbReference>
<dbReference type="Bgee" id="FBgn0035064">
    <property type="expression patterns" value="Expressed in embryonic/larval hemocyte (Drosophila) and 39 other cell types or tissues"/>
</dbReference>
<dbReference type="GO" id="GO:0005829">
    <property type="term" value="C:cytosol"/>
    <property type="evidence" value="ECO:0000318"/>
    <property type="project" value="GO_Central"/>
</dbReference>
<dbReference type="GO" id="GO:0005759">
    <property type="term" value="C:mitochondrial matrix"/>
    <property type="evidence" value="ECO:0007669"/>
    <property type="project" value="UniProtKB-SubCell"/>
</dbReference>
<dbReference type="GO" id="GO:0005739">
    <property type="term" value="C:mitochondrion"/>
    <property type="evidence" value="ECO:0000250"/>
    <property type="project" value="FlyBase"/>
</dbReference>
<dbReference type="GO" id="GO:0005524">
    <property type="term" value="F:ATP binding"/>
    <property type="evidence" value="ECO:0007669"/>
    <property type="project" value="UniProtKB-KW"/>
</dbReference>
<dbReference type="GO" id="GO:0003723">
    <property type="term" value="F:RNA binding"/>
    <property type="evidence" value="ECO:0007669"/>
    <property type="project" value="InterPro"/>
</dbReference>
<dbReference type="GO" id="GO:0004831">
    <property type="term" value="F:tyrosine-tRNA ligase activity"/>
    <property type="evidence" value="ECO:0000250"/>
    <property type="project" value="FlyBase"/>
</dbReference>
<dbReference type="GO" id="GO:0070184">
    <property type="term" value="P:mitochondrial tyrosyl-tRNA aminoacylation"/>
    <property type="evidence" value="ECO:0000250"/>
    <property type="project" value="FlyBase"/>
</dbReference>
<dbReference type="GO" id="GO:0043039">
    <property type="term" value="P:tRNA aminoacylation"/>
    <property type="evidence" value="ECO:0000318"/>
    <property type="project" value="GO_Central"/>
</dbReference>
<dbReference type="GO" id="GO:0006437">
    <property type="term" value="P:tyrosyl-tRNA aminoacylation"/>
    <property type="evidence" value="ECO:0000304"/>
    <property type="project" value="FlyBase"/>
</dbReference>
<dbReference type="CDD" id="cd00805">
    <property type="entry name" value="TyrRS_core"/>
    <property type="match status" value="1"/>
</dbReference>
<dbReference type="FunFam" id="1.10.240.10:FF:000001">
    <property type="entry name" value="Tyrosine--tRNA ligase"/>
    <property type="match status" value="1"/>
</dbReference>
<dbReference type="FunFam" id="3.10.290.10:FF:000017">
    <property type="entry name" value="Tyrosine--tRNA ligase"/>
    <property type="match status" value="1"/>
</dbReference>
<dbReference type="FunFam" id="3.40.50.620:FF:000107">
    <property type="entry name" value="Tyrosine--tRNA ligase"/>
    <property type="match status" value="1"/>
</dbReference>
<dbReference type="Gene3D" id="3.40.50.620">
    <property type="entry name" value="HUPs"/>
    <property type="match status" value="1"/>
</dbReference>
<dbReference type="Gene3D" id="3.10.290.10">
    <property type="entry name" value="RNA-binding S4 domain"/>
    <property type="match status" value="1"/>
</dbReference>
<dbReference type="Gene3D" id="1.10.240.10">
    <property type="entry name" value="Tyrosyl-Transfer RNA Synthetase"/>
    <property type="match status" value="1"/>
</dbReference>
<dbReference type="HAMAP" id="MF_02006">
    <property type="entry name" value="Tyr_tRNA_synth_type1"/>
    <property type="match status" value="1"/>
</dbReference>
<dbReference type="InterPro" id="IPR001412">
    <property type="entry name" value="aa-tRNA-synth_I_CS"/>
</dbReference>
<dbReference type="InterPro" id="IPR002305">
    <property type="entry name" value="aa-tRNA-synth_Ic"/>
</dbReference>
<dbReference type="InterPro" id="IPR014729">
    <property type="entry name" value="Rossmann-like_a/b/a_fold"/>
</dbReference>
<dbReference type="InterPro" id="IPR036986">
    <property type="entry name" value="S4_RNA-bd_sf"/>
</dbReference>
<dbReference type="InterPro" id="IPR002307">
    <property type="entry name" value="Tyr-tRNA-ligase"/>
</dbReference>
<dbReference type="InterPro" id="IPR024088">
    <property type="entry name" value="Tyr-tRNA-ligase_bac-type"/>
</dbReference>
<dbReference type="InterPro" id="IPR024107">
    <property type="entry name" value="Tyr-tRNA-ligase_bac_1"/>
</dbReference>
<dbReference type="NCBIfam" id="TIGR00234">
    <property type="entry name" value="tyrS"/>
    <property type="match status" value="1"/>
</dbReference>
<dbReference type="PANTHER" id="PTHR11766:SF0">
    <property type="entry name" value="TYROSINE--TRNA LIGASE, MITOCHONDRIAL"/>
    <property type="match status" value="1"/>
</dbReference>
<dbReference type="PANTHER" id="PTHR11766">
    <property type="entry name" value="TYROSYL-TRNA SYNTHETASE"/>
    <property type="match status" value="1"/>
</dbReference>
<dbReference type="Pfam" id="PF00579">
    <property type="entry name" value="tRNA-synt_1b"/>
    <property type="match status" value="1"/>
</dbReference>
<dbReference type="PRINTS" id="PR01040">
    <property type="entry name" value="TRNASYNTHTYR"/>
</dbReference>
<dbReference type="SUPFAM" id="SSF55174">
    <property type="entry name" value="Alpha-L RNA-binding motif"/>
    <property type="match status" value="1"/>
</dbReference>
<dbReference type="SUPFAM" id="SSF52374">
    <property type="entry name" value="Nucleotidylyl transferase"/>
    <property type="match status" value="1"/>
</dbReference>
<dbReference type="PROSITE" id="PS00178">
    <property type="entry name" value="AA_TRNA_LIGASE_I"/>
    <property type="match status" value="1"/>
</dbReference>
<sequence length="464" mass="52575">MLPLRRSLLKPLQDVLRHSHRQMSQKNLLELTDRGFFHGIFPDTAAPRMKQLFTRGQQSIYAGFDPTADSLHVGNLLVIMGLIHCQRAGHRPIALVGGATGLIGDPSGRKTERNQLGETVIETNLKAIEQQLRRVFENHENCLWDSKKQKLPLAPLIIVNNADWYADLQLIDFVANMGRHFRMGSMLSRSSVQSRLESEDGMSFTEFTYQIFQAYDWLHLLRRHNCCFQMGGSDQTGNLMTGHELISRVERKREVFGLTLPLVTTEEGDKFGKSAGNAVWLDGNKTSPFALYQFFLRMPDSEVEKLLKLFTFIPLPQVEQLMREHTKEPEKRKAQTLLAEDVTLLVHGESGLKQAERVTNALYKGNVEGLAELNLSEIQQTFQGATMVNLLTEPGMSILELAMKAKCFPTETDAVRIINAGGFYVNQKRVQNIAEVLTTGVHILRNGISLLRVGKRNFYIVRWQ</sequence>
<organism>
    <name type="scientific">Drosophila melanogaster</name>
    <name type="common">Fruit fly</name>
    <dbReference type="NCBI Taxonomy" id="7227"/>
    <lineage>
        <taxon>Eukaryota</taxon>
        <taxon>Metazoa</taxon>
        <taxon>Ecdysozoa</taxon>
        <taxon>Arthropoda</taxon>
        <taxon>Hexapoda</taxon>
        <taxon>Insecta</taxon>
        <taxon>Pterygota</taxon>
        <taxon>Neoptera</taxon>
        <taxon>Endopterygota</taxon>
        <taxon>Diptera</taxon>
        <taxon>Brachycera</taxon>
        <taxon>Muscomorpha</taxon>
        <taxon>Ephydroidea</taxon>
        <taxon>Drosophilidae</taxon>
        <taxon>Drosophila</taxon>
        <taxon>Sophophora</taxon>
    </lineage>
</organism>
<keyword id="KW-0030">Aminoacyl-tRNA synthetase</keyword>
<keyword id="KW-0067">ATP-binding</keyword>
<keyword id="KW-0436">Ligase</keyword>
<keyword id="KW-0496">Mitochondrion</keyword>
<keyword id="KW-0547">Nucleotide-binding</keyword>
<keyword id="KW-0648">Protein biosynthesis</keyword>
<keyword id="KW-1185">Reference proteome</keyword>
<keyword id="KW-0809">Transit peptide</keyword>
<reference key="1">
    <citation type="journal article" date="2000" name="Science">
        <title>The genome sequence of Drosophila melanogaster.</title>
        <authorList>
            <person name="Adams M.D."/>
            <person name="Celniker S.E."/>
            <person name="Holt R.A."/>
            <person name="Evans C.A."/>
            <person name="Gocayne J.D."/>
            <person name="Amanatides P.G."/>
            <person name="Scherer S.E."/>
            <person name="Li P.W."/>
            <person name="Hoskins R.A."/>
            <person name="Galle R.F."/>
            <person name="George R.A."/>
            <person name="Lewis S.E."/>
            <person name="Richards S."/>
            <person name="Ashburner M."/>
            <person name="Henderson S.N."/>
            <person name="Sutton G.G."/>
            <person name="Wortman J.R."/>
            <person name="Yandell M.D."/>
            <person name="Zhang Q."/>
            <person name="Chen L.X."/>
            <person name="Brandon R.C."/>
            <person name="Rogers Y.-H.C."/>
            <person name="Blazej R.G."/>
            <person name="Champe M."/>
            <person name="Pfeiffer B.D."/>
            <person name="Wan K.H."/>
            <person name="Doyle C."/>
            <person name="Baxter E.G."/>
            <person name="Helt G."/>
            <person name="Nelson C.R."/>
            <person name="Miklos G.L.G."/>
            <person name="Abril J.F."/>
            <person name="Agbayani A."/>
            <person name="An H.-J."/>
            <person name="Andrews-Pfannkoch C."/>
            <person name="Baldwin D."/>
            <person name="Ballew R.M."/>
            <person name="Basu A."/>
            <person name="Baxendale J."/>
            <person name="Bayraktaroglu L."/>
            <person name="Beasley E.M."/>
            <person name="Beeson K.Y."/>
            <person name="Benos P.V."/>
            <person name="Berman B.P."/>
            <person name="Bhandari D."/>
            <person name="Bolshakov S."/>
            <person name="Borkova D."/>
            <person name="Botchan M.R."/>
            <person name="Bouck J."/>
            <person name="Brokstein P."/>
            <person name="Brottier P."/>
            <person name="Burtis K.C."/>
            <person name="Busam D.A."/>
            <person name="Butler H."/>
            <person name="Cadieu E."/>
            <person name="Center A."/>
            <person name="Chandra I."/>
            <person name="Cherry J.M."/>
            <person name="Cawley S."/>
            <person name="Dahlke C."/>
            <person name="Davenport L.B."/>
            <person name="Davies P."/>
            <person name="de Pablos B."/>
            <person name="Delcher A."/>
            <person name="Deng Z."/>
            <person name="Mays A.D."/>
            <person name="Dew I."/>
            <person name="Dietz S.M."/>
            <person name="Dodson K."/>
            <person name="Doup L.E."/>
            <person name="Downes M."/>
            <person name="Dugan-Rocha S."/>
            <person name="Dunkov B.C."/>
            <person name="Dunn P."/>
            <person name="Durbin K.J."/>
            <person name="Evangelista C.C."/>
            <person name="Ferraz C."/>
            <person name="Ferriera S."/>
            <person name="Fleischmann W."/>
            <person name="Fosler C."/>
            <person name="Gabrielian A.E."/>
            <person name="Garg N.S."/>
            <person name="Gelbart W.M."/>
            <person name="Glasser K."/>
            <person name="Glodek A."/>
            <person name="Gong F."/>
            <person name="Gorrell J.H."/>
            <person name="Gu Z."/>
            <person name="Guan P."/>
            <person name="Harris M."/>
            <person name="Harris N.L."/>
            <person name="Harvey D.A."/>
            <person name="Heiman T.J."/>
            <person name="Hernandez J.R."/>
            <person name="Houck J."/>
            <person name="Hostin D."/>
            <person name="Houston K.A."/>
            <person name="Howland T.J."/>
            <person name="Wei M.-H."/>
            <person name="Ibegwam C."/>
            <person name="Jalali M."/>
            <person name="Kalush F."/>
            <person name="Karpen G.H."/>
            <person name="Ke Z."/>
            <person name="Kennison J.A."/>
            <person name="Ketchum K.A."/>
            <person name="Kimmel B.E."/>
            <person name="Kodira C.D."/>
            <person name="Kraft C.L."/>
            <person name="Kravitz S."/>
            <person name="Kulp D."/>
            <person name="Lai Z."/>
            <person name="Lasko P."/>
            <person name="Lei Y."/>
            <person name="Levitsky A.A."/>
            <person name="Li J.H."/>
            <person name="Li Z."/>
            <person name="Liang Y."/>
            <person name="Lin X."/>
            <person name="Liu X."/>
            <person name="Mattei B."/>
            <person name="McIntosh T.C."/>
            <person name="McLeod M.P."/>
            <person name="McPherson D."/>
            <person name="Merkulov G."/>
            <person name="Milshina N.V."/>
            <person name="Mobarry C."/>
            <person name="Morris J."/>
            <person name="Moshrefi A."/>
            <person name="Mount S.M."/>
            <person name="Moy M."/>
            <person name="Murphy B."/>
            <person name="Murphy L."/>
            <person name="Muzny D.M."/>
            <person name="Nelson D.L."/>
            <person name="Nelson D.R."/>
            <person name="Nelson K.A."/>
            <person name="Nixon K."/>
            <person name="Nusskern D.R."/>
            <person name="Pacleb J.M."/>
            <person name="Palazzolo M."/>
            <person name="Pittman G.S."/>
            <person name="Pan S."/>
            <person name="Pollard J."/>
            <person name="Puri V."/>
            <person name="Reese M.G."/>
            <person name="Reinert K."/>
            <person name="Remington K."/>
            <person name="Saunders R.D.C."/>
            <person name="Scheeler F."/>
            <person name="Shen H."/>
            <person name="Shue B.C."/>
            <person name="Siden-Kiamos I."/>
            <person name="Simpson M."/>
            <person name="Skupski M.P."/>
            <person name="Smith T.J."/>
            <person name="Spier E."/>
            <person name="Spradling A.C."/>
            <person name="Stapleton M."/>
            <person name="Strong R."/>
            <person name="Sun E."/>
            <person name="Svirskas R."/>
            <person name="Tector C."/>
            <person name="Turner R."/>
            <person name="Venter E."/>
            <person name="Wang A.H."/>
            <person name="Wang X."/>
            <person name="Wang Z.-Y."/>
            <person name="Wassarman D.A."/>
            <person name="Weinstock G.M."/>
            <person name="Weissenbach J."/>
            <person name="Williams S.M."/>
            <person name="Woodage T."/>
            <person name="Worley K.C."/>
            <person name="Wu D."/>
            <person name="Yang S."/>
            <person name="Yao Q.A."/>
            <person name="Ye J."/>
            <person name="Yeh R.-F."/>
            <person name="Zaveri J.S."/>
            <person name="Zhan M."/>
            <person name="Zhang G."/>
            <person name="Zhao Q."/>
            <person name="Zheng L."/>
            <person name="Zheng X.H."/>
            <person name="Zhong F.N."/>
            <person name="Zhong W."/>
            <person name="Zhou X."/>
            <person name="Zhu S.C."/>
            <person name="Zhu X."/>
            <person name="Smith H.O."/>
            <person name="Gibbs R.A."/>
            <person name="Myers E.W."/>
            <person name="Rubin G.M."/>
            <person name="Venter J.C."/>
        </authorList>
    </citation>
    <scope>NUCLEOTIDE SEQUENCE [LARGE SCALE GENOMIC DNA]</scope>
    <source>
        <strain>Berkeley</strain>
    </source>
</reference>
<reference key="2">
    <citation type="journal article" date="2002" name="Genome Biol.">
        <title>Annotation of the Drosophila melanogaster euchromatic genome: a systematic review.</title>
        <authorList>
            <person name="Misra S."/>
            <person name="Crosby M.A."/>
            <person name="Mungall C.J."/>
            <person name="Matthews B.B."/>
            <person name="Campbell K.S."/>
            <person name="Hradecky P."/>
            <person name="Huang Y."/>
            <person name="Kaminker J.S."/>
            <person name="Millburn G.H."/>
            <person name="Prochnik S.E."/>
            <person name="Smith C.D."/>
            <person name="Tupy J.L."/>
            <person name="Whitfield E.J."/>
            <person name="Bayraktaroglu L."/>
            <person name="Berman B.P."/>
            <person name="Bettencourt B.R."/>
            <person name="Celniker S.E."/>
            <person name="de Grey A.D.N.J."/>
            <person name="Drysdale R.A."/>
            <person name="Harris N.L."/>
            <person name="Richter J."/>
            <person name="Russo S."/>
            <person name="Schroeder A.J."/>
            <person name="Shu S.Q."/>
            <person name="Stapleton M."/>
            <person name="Yamada C."/>
            <person name="Ashburner M."/>
            <person name="Gelbart W.M."/>
            <person name="Rubin G.M."/>
            <person name="Lewis S.E."/>
        </authorList>
    </citation>
    <scope>GENOME REANNOTATION</scope>
    <source>
        <strain>Berkeley</strain>
    </source>
</reference>
<reference key="3">
    <citation type="journal article" date="2002" name="Genome Biol.">
        <title>A Drosophila full-length cDNA resource.</title>
        <authorList>
            <person name="Stapleton M."/>
            <person name="Carlson J.W."/>
            <person name="Brokstein P."/>
            <person name="Yu C."/>
            <person name="Champe M."/>
            <person name="George R.A."/>
            <person name="Guarin H."/>
            <person name="Kronmiller B."/>
            <person name="Pacleb J.M."/>
            <person name="Park S."/>
            <person name="Wan K.H."/>
            <person name="Rubin G.M."/>
            <person name="Celniker S.E."/>
        </authorList>
    </citation>
    <scope>NUCLEOTIDE SEQUENCE [LARGE SCALE MRNA]</scope>
    <source>
        <strain>Berkeley</strain>
        <tissue>Embryo</tissue>
        <tissue>Ovary</tissue>
    </source>
</reference>
<reference key="4">
    <citation type="submission" date="2007-10" db="EMBL/GenBank/DDBJ databases">
        <authorList>
            <person name="Stapleton M."/>
            <person name="Carlson J."/>
            <person name="Frise E."/>
            <person name="Kapadia B."/>
            <person name="Park S."/>
            <person name="Wan K."/>
            <person name="Yu C."/>
            <person name="Celniker S."/>
        </authorList>
    </citation>
    <scope>NUCLEOTIDE SEQUENCE [LARGE SCALE MRNA]</scope>
    <source>
        <strain evidence="4">Berkeley</strain>
    </source>
</reference>
<comment type="function">
    <text evidence="2">Catalyzes the attachment of tyrosine to tRNA(Tyr) in a two-step reaction: tyrosine is first activated by ATP to form Tyr-AMP and then transferred to the acceptor end of tRNA(Tyr).</text>
</comment>
<comment type="catalytic activity">
    <reaction evidence="2">
        <text>tRNA(Tyr) + L-tyrosine + ATP = L-tyrosyl-tRNA(Tyr) + AMP + diphosphate + H(+)</text>
        <dbReference type="Rhea" id="RHEA:10220"/>
        <dbReference type="Rhea" id="RHEA-COMP:9706"/>
        <dbReference type="Rhea" id="RHEA-COMP:9707"/>
        <dbReference type="ChEBI" id="CHEBI:15378"/>
        <dbReference type="ChEBI" id="CHEBI:30616"/>
        <dbReference type="ChEBI" id="CHEBI:33019"/>
        <dbReference type="ChEBI" id="CHEBI:58315"/>
        <dbReference type="ChEBI" id="CHEBI:78442"/>
        <dbReference type="ChEBI" id="CHEBI:78536"/>
        <dbReference type="ChEBI" id="CHEBI:456215"/>
        <dbReference type="EC" id="6.1.1.1"/>
    </reaction>
</comment>
<comment type="subunit">
    <text evidence="2">Homodimer.</text>
</comment>
<comment type="subcellular location">
    <subcellularLocation>
        <location evidence="2">Mitochondrion matrix</location>
    </subcellularLocation>
</comment>
<comment type="similarity">
    <text evidence="5">Belongs to the class-I aminoacyl-tRNA synthetase family.</text>
</comment>
<comment type="sequence caution" evidence="5">
    <conflict type="erroneous initiation">
        <sequence resource="EMBL-CDS" id="AAL28523"/>
    </conflict>
    <text>Truncated N-terminus.</text>
</comment>
<comment type="sequence caution" evidence="5">
    <conflict type="frameshift">
        <sequence resource="EMBL-CDS" id="AAM29400"/>
    </conflict>
</comment>
<accession>Q9W107</accession>
<accession>A8E6L8</accession>
<accession>Q8MZ26</accession>
<accession>Q95S33</accession>
<evidence type="ECO:0000250" key="1">
    <source>
        <dbReference type="UniProtKB" id="P00959"/>
    </source>
</evidence>
<evidence type="ECO:0000250" key="2">
    <source>
        <dbReference type="UniProtKB" id="Q9Y2Z4"/>
    </source>
</evidence>
<evidence type="ECO:0000255" key="3"/>
<evidence type="ECO:0000303" key="4">
    <source ref="4"/>
</evidence>
<evidence type="ECO:0000305" key="5"/>
<evidence type="ECO:0000312" key="6">
    <source>
        <dbReference type="FlyBase" id="FBgn0035064"/>
    </source>
</evidence>
<proteinExistence type="evidence at transcript level"/>
<name>SYYM_DROME</name>
<protein>
    <recommendedName>
        <fullName>Tyrosine--tRNA ligase, mitochondrial</fullName>
        <ecNumber evidence="2">6.1.1.1</ecNumber>
    </recommendedName>
    <alternativeName>
        <fullName evidence="6">Mitochondrial tyrosyl-tRNA synthetase</fullName>
    </alternativeName>
    <alternativeName>
        <fullName>Tyrosyl-tRNA synthetase</fullName>
        <shortName>TyrRS</shortName>
    </alternativeName>
</protein>
<gene>
    <name evidence="6" type="primary">TyrRS-m</name>
    <name evidence="6" type="synonym">Aats-tyr-m</name>
    <name evidence="6" type="ORF">CG16912</name>
</gene>
<feature type="transit peptide" description="Mitochondrion" evidence="3">
    <location>
        <begin position="1"/>
        <end status="unknown"/>
    </location>
</feature>
<feature type="chain" id="PRO_0000035832" description="Tyrosine--tRNA ligase, mitochondrial">
    <location>
        <begin status="unknown"/>
        <end position="464"/>
    </location>
</feature>
<feature type="short sequence motif" description="'HIGH' region">
    <location>
        <begin position="66"/>
        <end position="75"/>
    </location>
</feature>
<feature type="short sequence motif" description="'KMSKS' region">
    <location>
        <begin position="270"/>
        <end position="274"/>
    </location>
</feature>
<feature type="binding site" evidence="2">
    <location>
        <position position="61"/>
    </location>
    <ligand>
        <name>L-tyrosine</name>
        <dbReference type="ChEBI" id="CHEBI:58315"/>
    </ligand>
</feature>
<feature type="binding site" evidence="2">
    <location>
        <position position="65"/>
    </location>
    <ligand>
        <name>ATP</name>
        <dbReference type="ChEBI" id="CHEBI:30616"/>
    </ligand>
</feature>
<feature type="binding site" evidence="2">
    <location>
        <position position="105"/>
    </location>
    <ligand>
        <name>L-tyrosine</name>
        <dbReference type="ChEBI" id="CHEBI:58315"/>
    </ligand>
</feature>
<feature type="binding site" evidence="2">
    <location>
        <position position="209"/>
    </location>
    <ligand>
        <name>L-tyrosine</name>
        <dbReference type="ChEBI" id="CHEBI:58315"/>
    </ligand>
</feature>
<feature type="binding site" evidence="2">
    <location>
        <position position="213"/>
    </location>
    <ligand>
        <name>L-tyrosine</name>
        <dbReference type="ChEBI" id="CHEBI:58315"/>
    </ligand>
</feature>
<feature type="binding site" evidence="2">
    <location>
        <position position="216"/>
    </location>
    <ligand>
        <name>L-tyrosine</name>
        <dbReference type="ChEBI" id="CHEBI:58315"/>
    </ligand>
</feature>
<feature type="binding site" evidence="2">
    <location>
        <position position="235"/>
    </location>
    <ligand>
        <name>L-tyrosine</name>
        <dbReference type="ChEBI" id="CHEBI:58315"/>
    </ligand>
</feature>
<feature type="binding site" evidence="1">
    <location>
        <position position="273"/>
    </location>
    <ligand>
        <name>ATP</name>
        <dbReference type="ChEBI" id="CHEBI:30616"/>
    </ligand>
</feature>